<sequence>MTEKKYIVALDQGTTSSRAVVMDHDANIISVSQREFEQIYPKPGWVEHDPMEIWATQSSTLVEVLAKADISSDQIAAIGITNQRETTIVWEKETGKPIYNAIVWQCRRTAEICEHLKRDGLEDYIRSNTGLVIDPYFSGTKVKWILDHVEGSRERARRGELLFGTVDTWLIWKMTQGRVHVTDYTNASRTMLFNIHTLDWDDKMLEVLDIPREMLPEVRRSSEVYGQTNIGGKGGTRIPISGIAGDQQAALFGQLCVKEGMAKNTYGTGCFMLMNTGEKAVKSENGLLTTIACGPTGEVNYALEGAVFMAGASIQWLRDEMKLINDAYDSEYFATKVQNTNGVYVVPAFTGLGAPYWDPYARGAIFGLTRGVNANHIIRATLESIAYQTRDVLEAMQADSGIRLHALRVDGGAVANNFLMQFQSDILGTRVERPEVREVTALGAAYLAGLAVGFWQNLDELQEKAVIEREFRPGIETTERNYRYAGWKKAVKRAMAWEEHDE</sequence>
<proteinExistence type="inferred from homology"/>
<evidence type="ECO:0000255" key="1">
    <source>
        <dbReference type="HAMAP-Rule" id="MF_00186"/>
    </source>
</evidence>
<comment type="function">
    <text evidence="1">Key enzyme in the regulation of glycerol uptake and metabolism. Catalyzes the phosphorylation of glycerol to yield sn-glycerol 3-phosphate.</text>
</comment>
<comment type="catalytic activity">
    <reaction evidence="1">
        <text>glycerol + ATP = sn-glycerol 3-phosphate + ADP + H(+)</text>
        <dbReference type="Rhea" id="RHEA:21644"/>
        <dbReference type="ChEBI" id="CHEBI:15378"/>
        <dbReference type="ChEBI" id="CHEBI:17754"/>
        <dbReference type="ChEBI" id="CHEBI:30616"/>
        <dbReference type="ChEBI" id="CHEBI:57597"/>
        <dbReference type="ChEBI" id="CHEBI:456216"/>
        <dbReference type="EC" id="2.7.1.30"/>
    </reaction>
</comment>
<comment type="activity regulation">
    <text evidence="1">Activity of this regulatory enzyme is affected by several metabolites. Allosterically and non-competitively inhibited by fructose 1,6-bisphosphate (FBP) and unphosphorylated phosphocarrier protein EIIA-Glc (III-Glc), an integral component of the bacterial phosphotransferase (PTS) system.</text>
</comment>
<comment type="pathway">
    <text evidence="1">Polyol metabolism; glycerol degradation via glycerol kinase pathway; sn-glycerol 3-phosphate from glycerol: step 1/1.</text>
</comment>
<comment type="subunit">
    <text evidence="1">Homotetramer and homodimer (in equilibrium). Heterodimer with EIIA-Glc. Binds 1 zinc ion per glycerol kinase EIIA-Glc dimer. The zinc ion is important for dimerization.</text>
</comment>
<comment type="similarity">
    <text evidence="1">Belongs to the FGGY kinase family.</text>
</comment>
<name>GLPK_ECOLU</name>
<feature type="chain" id="PRO_1000118552" description="Glycerol kinase">
    <location>
        <begin position="1"/>
        <end position="502"/>
    </location>
</feature>
<feature type="binding site" evidence="1">
    <location>
        <position position="14"/>
    </location>
    <ligand>
        <name>ADP</name>
        <dbReference type="ChEBI" id="CHEBI:456216"/>
    </ligand>
</feature>
<feature type="binding site" evidence="1">
    <location>
        <position position="14"/>
    </location>
    <ligand>
        <name>ATP</name>
        <dbReference type="ChEBI" id="CHEBI:30616"/>
    </ligand>
</feature>
<feature type="binding site" evidence="1">
    <location>
        <position position="14"/>
    </location>
    <ligand>
        <name>sn-glycerol 3-phosphate</name>
        <dbReference type="ChEBI" id="CHEBI:57597"/>
    </ligand>
</feature>
<feature type="binding site" evidence="1">
    <location>
        <position position="15"/>
    </location>
    <ligand>
        <name>ATP</name>
        <dbReference type="ChEBI" id="CHEBI:30616"/>
    </ligand>
</feature>
<feature type="binding site" evidence="1">
    <location>
        <position position="16"/>
    </location>
    <ligand>
        <name>ATP</name>
        <dbReference type="ChEBI" id="CHEBI:30616"/>
    </ligand>
</feature>
<feature type="binding site" evidence="1">
    <location>
        <position position="18"/>
    </location>
    <ligand>
        <name>ADP</name>
        <dbReference type="ChEBI" id="CHEBI:456216"/>
    </ligand>
</feature>
<feature type="binding site" evidence="1">
    <location>
        <position position="84"/>
    </location>
    <ligand>
        <name>glycerol</name>
        <dbReference type="ChEBI" id="CHEBI:17754"/>
    </ligand>
</feature>
<feature type="binding site" evidence="1">
    <location>
        <position position="84"/>
    </location>
    <ligand>
        <name>sn-glycerol 3-phosphate</name>
        <dbReference type="ChEBI" id="CHEBI:57597"/>
    </ligand>
</feature>
<feature type="binding site" evidence="1">
    <location>
        <position position="85"/>
    </location>
    <ligand>
        <name>glycerol</name>
        <dbReference type="ChEBI" id="CHEBI:17754"/>
    </ligand>
</feature>
<feature type="binding site" evidence="1">
    <location>
        <position position="85"/>
    </location>
    <ligand>
        <name>sn-glycerol 3-phosphate</name>
        <dbReference type="ChEBI" id="CHEBI:57597"/>
    </ligand>
</feature>
<feature type="binding site" evidence="1">
    <location>
        <position position="136"/>
    </location>
    <ligand>
        <name>glycerol</name>
        <dbReference type="ChEBI" id="CHEBI:17754"/>
    </ligand>
</feature>
<feature type="binding site" evidence="1">
    <location>
        <position position="136"/>
    </location>
    <ligand>
        <name>sn-glycerol 3-phosphate</name>
        <dbReference type="ChEBI" id="CHEBI:57597"/>
    </ligand>
</feature>
<feature type="binding site" evidence="1">
    <location>
        <position position="246"/>
    </location>
    <ligand>
        <name>glycerol</name>
        <dbReference type="ChEBI" id="CHEBI:17754"/>
    </ligand>
</feature>
<feature type="binding site" evidence="1">
    <location>
        <position position="246"/>
    </location>
    <ligand>
        <name>sn-glycerol 3-phosphate</name>
        <dbReference type="ChEBI" id="CHEBI:57597"/>
    </ligand>
</feature>
<feature type="binding site" evidence="1">
    <location>
        <position position="247"/>
    </location>
    <ligand>
        <name>glycerol</name>
        <dbReference type="ChEBI" id="CHEBI:17754"/>
    </ligand>
</feature>
<feature type="binding site" evidence="1">
    <location>
        <position position="268"/>
    </location>
    <ligand>
        <name>ADP</name>
        <dbReference type="ChEBI" id="CHEBI:456216"/>
    </ligand>
</feature>
<feature type="binding site" evidence="1">
    <location>
        <position position="268"/>
    </location>
    <ligand>
        <name>ATP</name>
        <dbReference type="ChEBI" id="CHEBI:30616"/>
    </ligand>
</feature>
<feature type="binding site" evidence="1">
    <location>
        <position position="311"/>
    </location>
    <ligand>
        <name>ADP</name>
        <dbReference type="ChEBI" id="CHEBI:456216"/>
    </ligand>
</feature>
<feature type="binding site" evidence="1">
    <location>
        <position position="311"/>
    </location>
    <ligand>
        <name>ATP</name>
        <dbReference type="ChEBI" id="CHEBI:30616"/>
    </ligand>
</feature>
<feature type="binding site" evidence="1">
    <location>
        <position position="315"/>
    </location>
    <ligand>
        <name>ATP</name>
        <dbReference type="ChEBI" id="CHEBI:30616"/>
    </ligand>
</feature>
<feature type="binding site" evidence="1">
    <location>
        <position position="412"/>
    </location>
    <ligand>
        <name>ADP</name>
        <dbReference type="ChEBI" id="CHEBI:456216"/>
    </ligand>
</feature>
<feature type="binding site" evidence="1">
    <location>
        <position position="412"/>
    </location>
    <ligand>
        <name>ATP</name>
        <dbReference type="ChEBI" id="CHEBI:30616"/>
    </ligand>
</feature>
<feature type="binding site" evidence="1">
    <location>
        <position position="416"/>
    </location>
    <ligand>
        <name>ADP</name>
        <dbReference type="ChEBI" id="CHEBI:456216"/>
    </ligand>
</feature>
<protein>
    <recommendedName>
        <fullName evidence="1">Glycerol kinase</fullName>
        <ecNumber evidence="1">2.7.1.30</ecNumber>
    </recommendedName>
    <alternativeName>
        <fullName evidence="1">ATP:glycerol 3-phosphotransferase</fullName>
    </alternativeName>
    <alternativeName>
        <fullName evidence="1">Glycerokinase</fullName>
        <shortName evidence="1">GK</shortName>
    </alternativeName>
</protein>
<organism>
    <name type="scientific">Escherichia coli O17:K52:H18 (strain UMN026 / ExPEC)</name>
    <dbReference type="NCBI Taxonomy" id="585056"/>
    <lineage>
        <taxon>Bacteria</taxon>
        <taxon>Pseudomonadati</taxon>
        <taxon>Pseudomonadota</taxon>
        <taxon>Gammaproteobacteria</taxon>
        <taxon>Enterobacterales</taxon>
        <taxon>Enterobacteriaceae</taxon>
        <taxon>Escherichia</taxon>
    </lineage>
</organism>
<accession>B7NFM3</accession>
<dbReference type="EC" id="2.7.1.30" evidence="1"/>
<dbReference type="EMBL" id="CU928163">
    <property type="protein sequence ID" value="CAR15580.1"/>
    <property type="molecule type" value="Genomic_DNA"/>
</dbReference>
<dbReference type="RefSeq" id="WP_000136788.1">
    <property type="nucleotide sequence ID" value="NC_011751.1"/>
</dbReference>
<dbReference type="RefSeq" id="YP_002415069.1">
    <property type="nucleotide sequence ID" value="NC_011751.1"/>
</dbReference>
<dbReference type="SMR" id="B7NFM3"/>
<dbReference type="STRING" id="585056.ECUMN_4454"/>
<dbReference type="GeneID" id="75169366"/>
<dbReference type="KEGG" id="eum:ECUMN_4454"/>
<dbReference type="PATRIC" id="fig|585056.7.peg.4624"/>
<dbReference type="HOGENOM" id="CLU_009281_2_3_6"/>
<dbReference type="UniPathway" id="UPA00618">
    <property type="reaction ID" value="UER00672"/>
</dbReference>
<dbReference type="Proteomes" id="UP000007097">
    <property type="component" value="Chromosome"/>
</dbReference>
<dbReference type="GO" id="GO:0005829">
    <property type="term" value="C:cytosol"/>
    <property type="evidence" value="ECO:0007669"/>
    <property type="project" value="TreeGrafter"/>
</dbReference>
<dbReference type="GO" id="GO:0005524">
    <property type="term" value="F:ATP binding"/>
    <property type="evidence" value="ECO:0007669"/>
    <property type="project" value="UniProtKB-UniRule"/>
</dbReference>
<dbReference type="GO" id="GO:0004370">
    <property type="term" value="F:glycerol kinase activity"/>
    <property type="evidence" value="ECO:0000250"/>
    <property type="project" value="UniProtKB"/>
</dbReference>
<dbReference type="GO" id="GO:0046872">
    <property type="term" value="F:metal ion binding"/>
    <property type="evidence" value="ECO:0007669"/>
    <property type="project" value="UniProtKB-KW"/>
</dbReference>
<dbReference type="GO" id="GO:0019563">
    <property type="term" value="P:glycerol catabolic process"/>
    <property type="evidence" value="ECO:0007669"/>
    <property type="project" value="UniProtKB-UniRule"/>
</dbReference>
<dbReference type="GO" id="GO:0006071">
    <property type="term" value="P:glycerol metabolic process"/>
    <property type="evidence" value="ECO:0000250"/>
    <property type="project" value="UniProtKB"/>
</dbReference>
<dbReference type="GO" id="GO:0006072">
    <property type="term" value="P:glycerol-3-phosphate metabolic process"/>
    <property type="evidence" value="ECO:0007669"/>
    <property type="project" value="InterPro"/>
</dbReference>
<dbReference type="CDD" id="cd07786">
    <property type="entry name" value="FGGY_EcGK_like"/>
    <property type="match status" value="1"/>
</dbReference>
<dbReference type="FunFam" id="3.30.420.40:FF:000007">
    <property type="entry name" value="Glycerol kinase"/>
    <property type="match status" value="1"/>
</dbReference>
<dbReference type="FunFam" id="3.30.420.40:FF:000008">
    <property type="entry name" value="Glycerol kinase"/>
    <property type="match status" value="1"/>
</dbReference>
<dbReference type="Gene3D" id="3.30.420.40">
    <property type="match status" value="2"/>
</dbReference>
<dbReference type="HAMAP" id="MF_00186">
    <property type="entry name" value="Glycerol_kin"/>
    <property type="match status" value="1"/>
</dbReference>
<dbReference type="InterPro" id="IPR043129">
    <property type="entry name" value="ATPase_NBD"/>
</dbReference>
<dbReference type="InterPro" id="IPR000577">
    <property type="entry name" value="Carb_kinase_FGGY"/>
</dbReference>
<dbReference type="InterPro" id="IPR018483">
    <property type="entry name" value="Carb_kinase_FGGY_CS"/>
</dbReference>
<dbReference type="InterPro" id="IPR018485">
    <property type="entry name" value="FGGY_C"/>
</dbReference>
<dbReference type="InterPro" id="IPR018484">
    <property type="entry name" value="FGGY_N"/>
</dbReference>
<dbReference type="InterPro" id="IPR005999">
    <property type="entry name" value="Glycerol_kin"/>
</dbReference>
<dbReference type="NCBIfam" id="TIGR01311">
    <property type="entry name" value="glycerol_kin"/>
    <property type="match status" value="1"/>
</dbReference>
<dbReference type="NCBIfam" id="NF000756">
    <property type="entry name" value="PRK00047.1"/>
    <property type="match status" value="1"/>
</dbReference>
<dbReference type="PANTHER" id="PTHR10196:SF69">
    <property type="entry name" value="GLYCEROL KINASE"/>
    <property type="match status" value="1"/>
</dbReference>
<dbReference type="PANTHER" id="PTHR10196">
    <property type="entry name" value="SUGAR KINASE"/>
    <property type="match status" value="1"/>
</dbReference>
<dbReference type="Pfam" id="PF02782">
    <property type="entry name" value="FGGY_C"/>
    <property type="match status" value="1"/>
</dbReference>
<dbReference type="Pfam" id="PF00370">
    <property type="entry name" value="FGGY_N"/>
    <property type="match status" value="1"/>
</dbReference>
<dbReference type="PIRSF" id="PIRSF000538">
    <property type="entry name" value="GlpK"/>
    <property type="match status" value="1"/>
</dbReference>
<dbReference type="SUPFAM" id="SSF53067">
    <property type="entry name" value="Actin-like ATPase domain"/>
    <property type="match status" value="2"/>
</dbReference>
<dbReference type="PROSITE" id="PS00933">
    <property type="entry name" value="FGGY_KINASES_1"/>
    <property type="match status" value="1"/>
</dbReference>
<dbReference type="PROSITE" id="PS00445">
    <property type="entry name" value="FGGY_KINASES_2"/>
    <property type="match status" value="1"/>
</dbReference>
<reference key="1">
    <citation type="journal article" date="2009" name="PLoS Genet.">
        <title>Organised genome dynamics in the Escherichia coli species results in highly diverse adaptive paths.</title>
        <authorList>
            <person name="Touchon M."/>
            <person name="Hoede C."/>
            <person name="Tenaillon O."/>
            <person name="Barbe V."/>
            <person name="Baeriswyl S."/>
            <person name="Bidet P."/>
            <person name="Bingen E."/>
            <person name="Bonacorsi S."/>
            <person name="Bouchier C."/>
            <person name="Bouvet O."/>
            <person name="Calteau A."/>
            <person name="Chiapello H."/>
            <person name="Clermont O."/>
            <person name="Cruveiller S."/>
            <person name="Danchin A."/>
            <person name="Diard M."/>
            <person name="Dossat C."/>
            <person name="Karoui M.E."/>
            <person name="Frapy E."/>
            <person name="Garry L."/>
            <person name="Ghigo J.M."/>
            <person name="Gilles A.M."/>
            <person name="Johnson J."/>
            <person name="Le Bouguenec C."/>
            <person name="Lescat M."/>
            <person name="Mangenot S."/>
            <person name="Martinez-Jehanne V."/>
            <person name="Matic I."/>
            <person name="Nassif X."/>
            <person name="Oztas S."/>
            <person name="Petit M.A."/>
            <person name="Pichon C."/>
            <person name="Rouy Z."/>
            <person name="Ruf C.S."/>
            <person name="Schneider D."/>
            <person name="Tourret J."/>
            <person name="Vacherie B."/>
            <person name="Vallenet D."/>
            <person name="Medigue C."/>
            <person name="Rocha E.P.C."/>
            <person name="Denamur E."/>
        </authorList>
    </citation>
    <scope>NUCLEOTIDE SEQUENCE [LARGE SCALE GENOMIC DNA]</scope>
    <source>
        <strain>UMN026 / ExPEC</strain>
    </source>
</reference>
<keyword id="KW-0021">Allosteric enzyme</keyword>
<keyword id="KW-0067">ATP-binding</keyword>
<keyword id="KW-0319">Glycerol metabolism</keyword>
<keyword id="KW-0418">Kinase</keyword>
<keyword id="KW-0479">Metal-binding</keyword>
<keyword id="KW-0547">Nucleotide-binding</keyword>
<keyword id="KW-0808">Transferase</keyword>
<keyword id="KW-0862">Zinc</keyword>
<gene>
    <name evidence="1" type="primary">glpK</name>
    <name type="ordered locus">ECUMN_4454</name>
</gene>